<accession>A1ADV0</accession>
<dbReference type="EC" id="1.3.3.3" evidence="1"/>
<dbReference type="EMBL" id="CP000468">
    <property type="protein sequence ID" value="ABJ01840.1"/>
    <property type="molecule type" value="Genomic_DNA"/>
</dbReference>
<dbReference type="RefSeq" id="WP_001298446.1">
    <property type="nucleotide sequence ID" value="NZ_CADILS010000039.1"/>
</dbReference>
<dbReference type="SMR" id="A1ADV0"/>
<dbReference type="KEGG" id="ecv:APECO1_4112"/>
<dbReference type="HOGENOM" id="CLU_026169_0_1_6"/>
<dbReference type="UniPathway" id="UPA00251">
    <property type="reaction ID" value="UER00322"/>
</dbReference>
<dbReference type="Proteomes" id="UP000008216">
    <property type="component" value="Chromosome"/>
</dbReference>
<dbReference type="GO" id="GO:0005737">
    <property type="term" value="C:cytoplasm"/>
    <property type="evidence" value="ECO:0007669"/>
    <property type="project" value="UniProtKB-SubCell"/>
</dbReference>
<dbReference type="GO" id="GO:0004109">
    <property type="term" value="F:coproporphyrinogen oxidase activity"/>
    <property type="evidence" value="ECO:0007669"/>
    <property type="project" value="UniProtKB-UniRule"/>
</dbReference>
<dbReference type="GO" id="GO:0030145">
    <property type="term" value="F:manganese ion binding"/>
    <property type="evidence" value="ECO:0007669"/>
    <property type="project" value="UniProtKB-UniRule"/>
</dbReference>
<dbReference type="GO" id="GO:0042803">
    <property type="term" value="F:protein homodimerization activity"/>
    <property type="evidence" value="ECO:0000250"/>
    <property type="project" value="UniProtKB"/>
</dbReference>
<dbReference type="GO" id="GO:0006782">
    <property type="term" value="P:protoporphyrinogen IX biosynthetic process"/>
    <property type="evidence" value="ECO:0007669"/>
    <property type="project" value="UniProtKB-UniRule"/>
</dbReference>
<dbReference type="FunFam" id="3.40.1500.10:FF:000001">
    <property type="entry name" value="Oxygen-dependent coproporphyrinogen-III oxidase"/>
    <property type="match status" value="1"/>
</dbReference>
<dbReference type="Gene3D" id="3.40.1500.10">
    <property type="entry name" value="Coproporphyrinogen III oxidase, aerobic"/>
    <property type="match status" value="1"/>
</dbReference>
<dbReference type="HAMAP" id="MF_00333">
    <property type="entry name" value="Coprogen_oxidas"/>
    <property type="match status" value="1"/>
</dbReference>
<dbReference type="InterPro" id="IPR001260">
    <property type="entry name" value="Coprogen_oxidase_aer"/>
</dbReference>
<dbReference type="InterPro" id="IPR036406">
    <property type="entry name" value="Coprogen_oxidase_aer_sf"/>
</dbReference>
<dbReference type="InterPro" id="IPR018375">
    <property type="entry name" value="Coprogen_oxidase_CS"/>
</dbReference>
<dbReference type="NCBIfam" id="NF003727">
    <property type="entry name" value="PRK05330.1"/>
    <property type="match status" value="1"/>
</dbReference>
<dbReference type="PANTHER" id="PTHR10755">
    <property type="entry name" value="COPROPORPHYRINOGEN III OXIDASE, MITOCHONDRIAL"/>
    <property type="match status" value="1"/>
</dbReference>
<dbReference type="PANTHER" id="PTHR10755:SF0">
    <property type="entry name" value="OXYGEN-DEPENDENT COPROPORPHYRINOGEN-III OXIDASE, MITOCHONDRIAL"/>
    <property type="match status" value="1"/>
</dbReference>
<dbReference type="Pfam" id="PF01218">
    <property type="entry name" value="Coprogen_oxidas"/>
    <property type="match status" value="1"/>
</dbReference>
<dbReference type="PIRSF" id="PIRSF000166">
    <property type="entry name" value="Coproporphyri_ox"/>
    <property type="match status" value="1"/>
</dbReference>
<dbReference type="PRINTS" id="PR00073">
    <property type="entry name" value="COPRGNOXDASE"/>
</dbReference>
<dbReference type="SUPFAM" id="SSF102886">
    <property type="entry name" value="Coproporphyrinogen III oxidase"/>
    <property type="match status" value="1"/>
</dbReference>
<dbReference type="PROSITE" id="PS01021">
    <property type="entry name" value="COPROGEN_OXIDASE"/>
    <property type="match status" value="1"/>
</dbReference>
<comment type="function">
    <text evidence="1">Involved in the heme biosynthesis. Catalyzes the aerobic oxidative decarboxylation of propionate groups of rings A and B of coproporphyrinogen-III to yield the vinyl groups in protoporphyrinogen-IX.</text>
</comment>
<comment type="catalytic activity">
    <reaction evidence="1">
        <text>coproporphyrinogen III + O2 + 2 H(+) = protoporphyrinogen IX + 2 CO2 + 2 H2O</text>
        <dbReference type="Rhea" id="RHEA:18257"/>
        <dbReference type="ChEBI" id="CHEBI:15377"/>
        <dbReference type="ChEBI" id="CHEBI:15378"/>
        <dbReference type="ChEBI" id="CHEBI:15379"/>
        <dbReference type="ChEBI" id="CHEBI:16526"/>
        <dbReference type="ChEBI" id="CHEBI:57307"/>
        <dbReference type="ChEBI" id="CHEBI:57309"/>
        <dbReference type="EC" id="1.3.3.3"/>
    </reaction>
</comment>
<comment type="cofactor">
    <cofactor evidence="1">
        <name>Mn(2+)</name>
        <dbReference type="ChEBI" id="CHEBI:29035"/>
    </cofactor>
</comment>
<comment type="pathway">
    <text evidence="1">Porphyrin-containing compound metabolism; protoporphyrin-IX biosynthesis; protoporphyrinogen-IX from coproporphyrinogen-III (O2 route): step 1/1.</text>
</comment>
<comment type="subunit">
    <text evidence="1">Homodimer.</text>
</comment>
<comment type="subcellular location">
    <subcellularLocation>
        <location evidence="1">Cytoplasm</location>
    </subcellularLocation>
</comment>
<comment type="similarity">
    <text evidence="1">Belongs to the aerobic coproporphyrinogen-III oxidase family.</text>
</comment>
<reference key="1">
    <citation type="journal article" date="2007" name="J. Bacteriol.">
        <title>The genome sequence of avian pathogenic Escherichia coli strain O1:K1:H7 shares strong similarities with human extraintestinal pathogenic E. coli genomes.</title>
        <authorList>
            <person name="Johnson T.J."/>
            <person name="Kariyawasam S."/>
            <person name="Wannemuehler Y."/>
            <person name="Mangiamele P."/>
            <person name="Johnson S.J."/>
            <person name="Doetkott C."/>
            <person name="Skyberg J.A."/>
            <person name="Lynne A.M."/>
            <person name="Johnson J.R."/>
            <person name="Nolan L.K."/>
        </authorList>
    </citation>
    <scope>NUCLEOTIDE SEQUENCE [LARGE SCALE GENOMIC DNA]</scope>
</reference>
<proteinExistence type="inferred from homology"/>
<keyword id="KW-0963">Cytoplasm</keyword>
<keyword id="KW-0350">Heme biosynthesis</keyword>
<keyword id="KW-0464">Manganese</keyword>
<keyword id="KW-0479">Metal-binding</keyword>
<keyword id="KW-0560">Oxidoreductase</keyword>
<keyword id="KW-0627">Porphyrin biosynthesis</keyword>
<keyword id="KW-1185">Reference proteome</keyword>
<organism>
    <name type="scientific">Escherichia coli O1:K1 / APEC</name>
    <dbReference type="NCBI Taxonomy" id="405955"/>
    <lineage>
        <taxon>Bacteria</taxon>
        <taxon>Pseudomonadati</taxon>
        <taxon>Pseudomonadota</taxon>
        <taxon>Gammaproteobacteria</taxon>
        <taxon>Enterobacterales</taxon>
        <taxon>Enterobacteriaceae</taxon>
        <taxon>Escherichia</taxon>
    </lineage>
</organism>
<sequence length="299" mass="34304">MKPDAHQVKQFLLNLQDTICQQLSAVDGAEFVEDSWQREAGGGGRSRVLRNGGVFEQAGVNFSHVHGEAMPASATAHRPELAGRSFEAMGVSLVVHPHNPYVPTSHANVRFFIAEKPGAEPVWWFGGGFDLTPFYGFEEDAIHWHRTARDLCLPFGEDVYPRYKKWCDEYFYLKHRNEQRGIGGLFFDDLNTPDFDHCFAFMQAVGKGYTDAYLPIVERRKAMAYGERERNFQLYRRGRYVEFNLVWDRGTLFGLQTGGRTESILMSMPPLVRWEYDYQPKDGSPEAALSEFIKVRDWV</sequence>
<evidence type="ECO:0000255" key="1">
    <source>
        <dbReference type="HAMAP-Rule" id="MF_00333"/>
    </source>
</evidence>
<name>HEM6_ECOK1</name>
<protein>
    <recommendedName>
        <fullName evidence="1">Oxygen-dependent coproporphyrinogen-III oxidase</fullName>
        <shortName evidence="1">CPO</shortName>
        <shortName evidence="1">Coprogen oxidase</shortName>
        <shortName evidence="1">Coproporphyrinogenase</shortName>
        <ecNumber evidence="1">1.3.3.3</ecNumber>
    </recommendedName>
</protein>
<feature type="chain" id="PRO_1000019468" description="Oxygen-dependent coproporphyrinogen-III oxidase">
    <location>
        <begin position="1"/>
        <end position="299"/>
    </location>
</feature>
<feature type="region of interest" description="Important for dimerization" evidence="1">
    <location>
        <begin position="240"/>
        <end position="275"/>
    </location>
</feature>
<feature type="active site" description="Proton donor" evidence="1">
    <location>
        <position position="106"/>
    </location>
</feature>
<feature type="binding site" evidence="1">
    <location>
        <position position="92"/>
    </location>
    <ligand>
        <name>substrate</name>
    </ligand>
</feature>
<feature type="binding site" evidence="1">
    <location>
        <position position="96"/>
    </location>
    <ligand>
        <name>Mn(2+)</name>
        <dbReference type="ChEBI" id="CHEBI:29035"/>
    </ligand>
</feature>
<feature type="binding site" evidence="1">
    <location>
        <position position="106"/>
    </location>
    <ligand>
        <name>Mn(2+)</name>
        <dbReference type="ChEBI" id="CHEBI:29035"/>
    </ligand>
</feature>
<feature type="binding site" evidence="1">
    <location>
        <begin position="108"/>
        <end position="110"/>
    </location>
    <ligand>
        <name>substrate</name>
    </ligand>
</feature>
<feature type="binding site" evidence="1">
    <location>
        <position position="145"/>
    </location>
    <ligand>
        <name>Mn(2+)</name>
        <dbReference type="ChEBI" id="CHEBI:29035"/>
    </ligand>
</feature>
<feature type="binding site" evidence="1">
    <location>
        <position position="175"/>
    </location>
    <ligand>
        <name>Mn(2+)</name>
        <dbReference type="ChEBI" id="CHEBI:29035"/>
    </ligand>
</feature>
<feature type="binding site" evidence="1">
    <location>
        <begin position="258"/>
        <end position="260"/>
    </location>
    <ligand>
        <name>substrate</name>
    </ligand>
</feature>
<feature type="site" description="Important for dimerization" evidence="1">
    <location>
        <position position="175"/>
    </location>
</feature>
<gene>
    <name evidence="1" type="primary">hemF</name>
    <name type="ordered locus">Ecok1_23460</name>
    <name type="ORF">APECO1_4112</name>
</gene>